<sequence length="617" mass="69830">MSFKDLREFIDHLEQKGRLKRITHPVDPAYEMTEISDRTLRAGGPALLFENPIGYNVPVLTNLFGTPERVAIGMGREDVKELREVGKLLAYLKEPEPPKGFKDALEKLPVFKQVLNMPAKRLRKAPCQDIVWQGDEVDLDKIPVMSCWAEDVAPLLTWGLTVTKGPNKKRQNLGIYRQQKIAKNKIIMRWLAHRGGALDLRDWMETNPGKPFPVSVAFGADPATILGAVTPVPDTLSEYAFAGLLRGSKTEVVKSISNDLEVPASAEIVMEGYIDPNEFADEGPYGDHTGYYNEKEKHHVFTITHITMRKDPIYHSTYTGRPPDEPAVLGVALNEVFVPILQKQFPEIEDFYLPPEGCSYRMAVVTMKKQYPGHAKRVMMGVWSFLRQFMYTKFVIVCDESVNARDWNDVVKAMTEHMDPVRDTLMIDNTPIDSLDFASPVVGLGSKMGLDATIKWDAELATRPQISKQDSKVITEADLESLKQQRPEIIDIYLPPTTNNRFAVVTMKKDQAGQSQALMEYLWDFFAQYTDNKFVILCDEDVNARDWNDIIWAVTTRMDPDRDTTRVSGKAESSSKLGLDATNKFESEVTREWGTPIKKDPKLVAKVDEIWDQLGIL</sequence>
<comment type="function">
    <text evidence="1">Catalyzes the decarboxylation of 3-octaprenyl-4-hydroxy benzoate to 2-octaprenylphenol.</text>
</comment>
<comment type="cofactor">
    <cofactor evidence="1">
        <name>a divalent metal cation</name>
        <dbReference type="ChEBI" id="CHEBI:60240"/>
    </cofactor>
</comment>
<comment type="pathway">
    <text>Cofactor biosynthesis; ubiquinone biosynthesis.</text>
</comment>
<comment type="subunit">
    <text evidence="1">Homohexamer.</text>
</comment>
<comment type="subcellular location">
    <subcellularLocation>
        <location evidence="1">Cell membrane</location>
        <topology evidence="1">Peripheral membrane protein</topology>
    </subcellularLocation>
</comment>
<comment type="similarity">
    <text evidence="2">Belongs to the UbiD family.</text>
</comment>
<gene>
    <name type="primary">ubiD</name>
    <name type="ordered locus">VP2997</name>
</gene>
<dbReference type="EC" id="4.1.1.-"/>
<dbReference type="EMBL" id="BA000031">
    <property type="protein sequence ID" value="BAC61260.1"/>
    <property type="molecule type" value="Genomic_DNA"/>
</dbReference>
<dbReference type="RefSeq" id="NP_799376.1">
    <property type="nucleotide sequence ID" value="NC_004603.1"/>
</dbReference>
<dbReference type="RefSeq" id="WP_005489172.1">
    <property type="nucleotide sequence ID" value="NC_004603.1"/>
</dbReference>
<dbReference type="SMR" id="Q87KI0"/>
<dbReference type="GeneID" id="1190589"/>
<dbReference type="KEGG" id="vpa:VP2997"/>
<dbReference type="PATRIC" id="fig|223926.6.peg.2883"/>
<dbReference type="eggNOG" id="COG0043">
    <property type="taxonomic scope" value="Bacteria"/>
</dbReference>
<dbReference type="HOGENOM" id="CLU_023348_4_0_6"/>
<dbReference type="UniPathway" id="UPA00232"/>
<dbReference type="Proteomes" id="UP000002493">
    <property type="component" value="Chromosome 1"/>
</dbReference>
<dbReference type="GO" id="GO:0005829">
    <property type="term" value="C:cytosol"/>
    <property type="evidence" value="ECO:0007669"/>
    <property type="project" value="TreeGrafter"/>
</dbReference>
<dbReference type="GO" id="GO:0005886">
    <property type="term" value="C:plasma membrane"/>
    <property type="evidence" value="ECO:0007669"/>
    <property type="project" value="UniProtKB-SubCell"/>
</dbReference>
<dbReference type="GO" id="GO:0008694">
    <property type="term" value="F:3-octaprenyl-4-hydroxybenzoate carboxy-lyase activity"/>
    <property type="evidence" value="ECO:0007669"/>
    <property type="project" value="TreeGrafter"/>
</dbReference>
<dbReference type="GO" id="GO:0006744">
    <property type="term" value="P:ubiquinone biosynthetic process"/>
    <property type="evidence" value="ECO:0007669"/>
    <property type="project" value="UniProtKB-UniPathway"/>
</dbReference>
<dbReference type="FunFam" id="3.40.1670.10:FF:000001">
    <property type="entry name" value="3-octaprenyl-4-hydroxybenzoate carboxy-lyase"/>
    <property type="match status" value="1"/>
</dbReference>
<dbReference type="Gene3D" id="1.20.5.570">
    <property type="entry name" value="Single helix bin"/>
    <property type="match status" value="1"/>
</dbReference>
<dbReference type="Gene3D" id="3.40.1670.10">
    <property type="entry name" value="UbiD C-terminal domain-like"/>
    <property type="match status" value="2"/>
</dbReference>
<dbReference type="InterPro" id="IPR002830">
    <property type="entry name" value="UbiD"/>
</dbReference>
<dbReference type="InterPro" id="IPR049381">
    <property type="entry name" value="UbiD-like_C"/>
</dbReference>
<dbReference type="InterPro" id="IPR049383">
    <property type="entry name" value="UbiD-like_N"/>
</dbReference>
<dbReference type="InterPro" id="IPR048304">
    <property type="entry name" value="UbiD_Rift_dom"/>
</dbReference>
<dbReference type="NCBIfam" id="NF008175">
    <property type="entry name" value="PRK10922.1"/>
    <property type="match status" value="1"/>
</dbReference>
<dbReference type="NCBIfam" id="TIGR00148">
    <property type="entry name" value="UbiD family decarboxylase"/>
    <property type="match status" value="1"/>
</dbReference>
<dbReference type="PANTHER" id="PTHR30108">
    <property type="entry name" value="3-OCTAPRENYL-4-HYDROXYBENZOATE CARBOXY-LYASE-RELATED"/>
    <property type="match status" value="1"/>
</dbReference>
<dbReference type="PANTHER" id="PTHR30108:SF17">
    <property type="entry name" value="FERULIC ACID DECARBOXYLASE 1"/>
    <property type="match status" value="1"/>
</dbReference>
<dbReference type="Pfam" id="PF01977">
    <property type="entry name" value="UbiD"/>
    <property type="match status" value="1"/>
</dbReference>
<dbReference type="Pfam" id="PF20696">
    <property type="entry name" value="UbiD_C"/>
    <property type="match status" value="2"/>
</dbReference>
<dbReference type="Pfam" id="PF20695">
    <property type="entry name" value="UbiD_N"/>
    <property type="match status" value="1"/>
</dbReference>
<dbReference type="SUPFAM" id="SSF50475">
    <property type="entry name" value="FMN-binding split barrel"/>
    <property type="match status" value="1"/>
</dbReference>
<dbReference type="SUPFAM" id="SSF143968">
    <property type="entry name" value="UbiD C-terminal domain-like"/>
    <property type="match status" value="2"/>
</dbReference>
<organism>
    <name type="scientific">Vibrio parahaemolyticus serotype O3:K6 (strain RIMD 2210633)</name>
    <dbReference type="NCBI Taxonomy" id="223926"/>
    <lineage>
        <taxon>Bacteria</taxon>
        <taxon>Pseudomonadati</taxon>
        <taxon>Pseudomonadota</taxon>
        <taxon>Gammaproteobacteria</taxon>
        <taxon>Vibrionales</taxon>
        <taxon>Vibrionaceae</taxon>
        <taxon>Vibrio</taxon>
    </lineage>
</organism>
<evidence type="ECO:0000250" key="1"/>
<evidence type="ECO:0000305" key="2"/>
<reference key="1">
    <citation type="journal article" date="2003" name="Lancet">
        <title>Genome sequence of Vibrio parahaemolyticus: a pathogenic mechanism distinct from that of V. cholerae.</title>
        <authorList>
            <person name="Makino K."/>
            <person name="Oshima K."/>
            <person name="Kurokawa K."/>
            <person name="Yokoyama K."/>
            <person name="Uda T."/>
            <person name="Tagomori K."/>
            <person name="Iijima Y."/>
            <person name="Najima M."/>
            <person name="Nakano M."/>
            <person name="Yamashita A."/>
            <person name="Kubota Y."/>
            <person name="Kimura S."/>
            <person name="Yasunaga T."/>
            <person name="Honda T."/>
            <person name="Shinagawa H."/>
            <person name="Hattori M."/>
            <person name="Iida T."/>
        </authorList>
    </citation>
    <scope>NUCLEOTIDE SEQUENCE [LARGE SCALE GENOMIC DNA]</scope>
    <source>
        <strain>RIMD 2210633</strain>
    </source>
</reference>
<keyword id="KW-1003">Cell membrane</keyword>
<keyword id="KW-0210">Decarboxylase</keyword>
<keyword id="KW-0456">Lyase</keyword>
<keyword id="KW-0472">Membrane</keyword>
<keyword id="KW-0831">Ubiquinone biosynthesis</keyword>
<protein>
    <recommendedName>
        <fullName>3-octaprenyl-4-hydroxybenzoate carboxy-lyase</fullName>
        <ecNumber>4.1.1.-</ecNumber>
    </recommendedName>
    <alternativeName>
        <fullName>Polyprenyl p-hydroxybenzoate decarboxylase</fullName>
    </alternativeName>
</protein>
<proteinExistence type="inferred from homology"/>
<name>UBID_VIBPA</name>
<accession>Q87KI0</accession>
<feature type="chain" id="PRO_0000267706" description="3-octaprenyl-4-hydroxybenzoate carboxy-lyase">
    <location>
        <begin position="1"/>
        <end position="617"/>
    </location>
</feature>
<feature type="region of interest" description="Unknown insert">
    <location>
        <begin position="460"/>
        <end position="588"/>
    </location>
</feature>